<organism>
    <name type="scientific">Pseudomonas entomophila (strain L48)</name>
    <dbReference type="NCBI Taxonomy" id="384676"/>
    <lineage>
        <taxon>Bacteria</taxon>
        <taxon>Pseudomonadati</taxon>
        <taxon>Pseudomonadota</taxon>
        <taxon>Gammaproteobacteria</taxon>
        <taxon>Pseudomonadales</taxon>
        <taxon>Pseudomonadaceae</taxon>
        <taxon>Pseudomonas</taxon>
    </lineage>
</organism>
<comment type="function">
    <text evidence="1">May play a role in DNA repair. It seems to be involved in an RecBC-independent recombinational process of DNA repair. It may act with RecF and RecO.</text>
</comment>
<comment type="similarity">
    <text evidence="1">Belongs to the RecR family.</text>
</comment>
<accession>Q1ICI0</accession>
<sequence>MSFSPLIRQLIDALRILPGVGQKTAQRMALQLLERDRSGGTRLAQALSQAMEGVGHCRQCRTLTEQELCPQCADPRRDDTQLCVVEGPVDVYAVEQTGYRGRYFVLKGHLSPLDGLGPEAIGIPQLMARIEEQGTFSEVILATNPTVEGEATAHYIAQLLAEKGLTATRIAHGVPLGGELELVDGGTLAHAFAGRRPIAL</sequence>
<proteinExistence type="inferred from homology"/>
<feature type="chain" id="PRO_1000001583" description="Recombination protein RecR">
    <location>
        <begin position="1"/>
        <end position="200"/>
    </location>
</feature>
<feature type="domain" description="Toprim" evidence="1">
    <location>
        <begin position="80"/>
        <end position="175"/>
    </location>
</feature>
<feature type="zinc finger region" description="C4-type" evidence="1">
    <location>
        <begin position="57"/>
        <end position="72"/>
    </location>
</feature>
<protein>
    <recommendedName>
        <fullName evidence="1">Recombination protein RecR</fullName>
    </recommendedName>
</protein>
<keyword id="KW-0227">DNA damage</keyword>
<keyword id="KW-0233">DNA recombination</keyword>
<keyword id="KW-0234">DNA repair</keyword>
<keyword id="KW-0479">Metal-binding</keyword>
<keyword id="KW-0862">Zinc</keyword>
<keyword id="KW-0863">Zinc-finger</keyword>
<reference key="1">
    <citation type="journal article" date="2006" name="Nat. Biotechnol.">
        <title>Complete genome sequence of the entomopathogenic and metabolically versatile soil bacterium Pseudomonas entomophila.</title>
        <authorList>
            <person name="Vodovar N."/>
            <person name="Vallenet D."/>
            <person name="Cruveiller S."/>
            <person name="Rouy Z."/>
            <person name="Barbe V."/>
            <person name="Acosta C."/>
            <person name="Cattolico L."/>
            <person name="Jubin C."/>
            <person name="Lajus A."/>
            <person name="Segurens B."/>
            <person name="Vacherie B."/>
            <person name="Wincker P."/>
            <person name="Weissenbach J."/>
            <person name="Lemaitre B."/>
            <person name="Medigue C."/>
            <person name="Boccard F."/>
        </authorList>
    </citation>
    <scope>NUCLEOTIDE SEQUENCE [LARGE SCALE GENOMIC DNA]</scope>
    <source>
        <strain>L48</strain>
    </source>
</reference>
<name>RECR_PSEE4</name>
<evidence type="ECO:0000255" key="1">
    <source>
        <dbReference type="HAMAP-Rule" id="MF_00017"/>
    </source>
</evidence>
<gene>
    <name evidence="1" type="primary">recR</name>
    <name type="ordered locus">PSEEN1790</name>
</gene>
<dbReference type="EMBL" id="CT573326">
    <property type="protein sequence ID" value="CAK14633.1"/>
    <property type="molecule type" value="Genomic_DNA"/>
</dbReference>
<dbReference type="RefSeq" id="WP_011533042.1">
    <property type="nucleotide sequence ID" value="NC_008027.1"/>
</dbReference>
<dbReference type="SMR" id="Q1ICI0"/>
<dbReference type="STRING" id="384676.PSEEN1790"/>
<dbReference type="GeneID" id="32805020"/>
<dbReference type="KEGG" id="pen:PSEEN1790"/>
<dbReference type="eggNOG" id="COG0353">
    <property type="taxonomic scope" value="Bacteria"/>
</dbReference>
<dbReference type="HOGENOM" id="CLU_060739_1_2_6"/>
<dbReference type="OrthoDB" id="9802672at2"/>
<dbReference type="Proteomes" id="UP000000658">
    <property type="component" value="Chromosome"/>
</dbReference>
<dbReference type="GO" id="GO:0003677">
    <property type="term" value="F:DNA binding"/>
    <property type="evidence" value="ECO:0007669"/>
    <property type="project" value="UniProtKB-UniRule"/>
</dbReference>
<dbReference type="GO" id="GO:0008270">
    <property type="term" value="F:zinc ion binding"/>
    <property type="evidence" value="ECO:0007669"/>
    <property type="project" value="UniProtKB-KW"/>
</dbReference>
<dbReference type="GO" id="GO:0006310">
    <property type="term" value="P:DNA recombination"/>
    <property type="evidence" value="ECO:0007669"/>
    <property type="project" value="UniProtKB-UniRule"/>
</dbReference>
<dbReference type="GO" id="GO:0006281">
    <property type="term" value="P:DNA repair"/>
    <property type="evidence" value="ECO:0007669"/>
    <property type="project" value="UniProtKB-UniRule"/>
</dbReference>
<dbReference type="CDD" id="cd01025">
    <property type="entry name" value="TOPRIM_recR"/>
    <property type="match status" value="1"/>
</dbReference>
<dbReference type="Gene3D" id="3.40.1360.10">
    <property type="match status" value="1"/>
</dbReference>
<dbReference type="Gene3D" id="6.10.250.240">
    <property type="match status" value="1"/>
</dbReference>
<dbReference type="Gene3D" id="1.10.8.420">
    <property type="entry name" value="RecR Domain 1"/>
    <property type="match status" value="1"/>
</dbReference>
<dbReference type="HAMAP" id="MF_00017">
    <property type="entry name" value="RecR"/>
    <property type="match status" value="1"/>
</dbReference>
<dbReference type="InterPro" id="IPR000093">
    <property type="entry name" value="DNA_Rcmb_RecR"/>
</dbReference>
<dbReference type="InterPro" id="IPR023627">
    <property type="entry name" value="Rcmb_RecR"/>
</dbReference>
<dbReference type="InterPro" id="IPR015967">
    <property type="entry name" value="Rcmb_RecR_Znf"/>
</dbReference>
<dbReference type="InterPro" id="IPR006171">
    <property type="entry name" value="TOPRIM_dom"/>
</dbReference>
<dbReference type="InterPro" id="IPR034137">
    <property type="entry name" value="TOPRIM_RecR"/>
</dbReference>
<dbReference type="NCBIfam" id="TIGR00615">
    <property type="entry name" value="recR"/>
    <property type="match status" value="1"/>
</dbReference>
<dbReference type="PANTHER" id="PTHR30446">
    <property type="entry name" value="RECOMBINATION PROTEIN RECR"/>
    <property type="match status" value="1"/>
</dbReference>
<dbReference type="PANTHER" id="PTHR30446:SF0">
    <property type="entry name" value="RECOMBINATION PROTEIN RECR"/>
    <property type="match status" value="1"/>
</dbReference>
<dbReference type="Pfam" id="PF21175">
    <property type="entry name" value="RecR_C"/>
    <property type="match status" value="1"/>
</dbReference>
<dbReference type="Pfam" id="PF21176">
    <property type="entry name" value="RecR_HhH"/>
    <property type="match status" value="1"/>
</dbReference>
<dbReference type="Pfam" id="PF02132">
    <property type="entry name" value="RecR_ZnF"/>
    <property type="match status" value="1"/>
</dbReference>
<dbReference type="Pfam" id="PF13662">
    <property type="entry name" value="Toprim_4"/>
    <property type="match status" value="1"/>
</dbReference>
<dbReference type="SMART" id="SM00493">
    <property type="entry name" value="TOPRIM"/>
    <property type="match status" value="1"/>
</dbReference>
<dbReference type="SUPFAM" id="SSF111304">
    <property type="entry name" value="Recombination protein RecR"/>
    <property type="match status" value="1"/>
</dbReference>
<dbReference type="PROSITE" id="PS01300">
    <property type="entry name" value="RECR"/>
    <property type="match status" value="1"/>
</dbReference>
<dbReference type="PROSITE" id="PS50880">
    <property type="entry name" value="TOPRIM"/>
    <property type="match status" value="1"/>
</dbReference>